<sequence>MSEELPQRRETHPEELVRNVRERERDTWQWTSIRVPEEILQRWLAMLRSGRNRKKVYREMQKWMWIHPKGPVIRACGCRLCNPGWGT</sequence>
<feature type="chain" id="PRO_0000085485" description="Probable Vpr-like protein">
    <location>
        <begin position="1"/>
        <end position="87"/>
    </location>
</feature>
<feature type="short sequence motif" description="Nuclear export signal" evidence="1">
    <location>
        <begin position="40"/>
        <end position="47"/>
    </location>
</feature>
<feature type="short sequence motif" description="Nuclear localization signal" evidence="1">
    <location>
        <begin position="48"/>
        <end position="55"/>
    </location>
</feature>
<feature type="sequence conflict" description="In Ref. 2; AAA91828." evidence="4" ref="2">
    <original>E</original>
    <variation>A</variation>
    <location>
        <position position="37"/>
    </location>
</feature>
<feature type="sequence conflict" description="In Ref. 2; AAA91828." evidence="4" ref="2">
    <original>G</original>
    <variation>A</variation>
    <location>
        <position position="70"/>
    </location>
</feature>
<organismHost>
    <name type="scientific">Capra hircus</name>
    <name type="common">Goat</name>
    <dbReference type="NCBI Taxonomy" id="9925"/>
</organismHost>
<accession>P21124</accession>
<dbReference type="EMBL" id="M34092">
    <property type="protein sequence ID" value="AAA42890.1"/>
    <property type="molecule type" value="Genomic_RNA"/>
</dbReference>
<dbReference type="EMBL" id="M33677">
    <property type="protein sequence ID" value="AAA91828.1"/>
    <property type="molecule type" value="Genomic_RNA"/>
</dbReference>
<dbReference type="PIR" id="D45345">
    <property type="entry name" value="D45345"/>
</dbReference>
<dbReference type="RefSeq" id="NP_040941.1">
    <property type="nucleotide sequence ID" value="NC_001463.1"/>
</dbReference>
<dbReference type="SMR" id="P21124"/>
<dbReference type="KEGG" id="vg:1724701"/>
<dbReference type="Proteomes" id="UP000203242">
    <property type="component" value="Segment"/>
</dbReference>
<dbReference type="GO" id="GO:0042025">
    <property type="term" value="C:host cell nucleus"/>
    <property type="evidence" value="ECO:0007669"/>
    <property type="project" value="UniProtKB-SubCell"/>
</dbReference>
<dbReference type="GO" id="GO:0044423">
    <property type="term" value="C:virion component"/>
    <property type="evidence" value="ECO:0007669"/>
    <property type="project" value="UniProtKB-KW"/>
</dbReference>
<dbReference type="InterPro" id="IPR004247">
    <property type="entry name" value="Lentiviral_Vpr-like"/>
</dbReference>
<dbReference type="Pfam" id="PF02998">
    <property type="entry name" value="Lentiviral_Tat"/>
    <property type="match status" value="1"/>
</dbReference>
<reference key="1">
    <citation type="journal article" date="1991" name="Virology">
        <title>Genetic structure of the pol-env region of the caprine arthritis-encephalitis lentivirus genome.</title>
        <authorList>
            <person name="Jackson M.K."/>
            <person name="Knowles D.P."/>
            <person name="Stem T.A."/>
            <person name="Harwood W.G."/>
            <person name="Robinson M.M."/>
            <person name="Cheevers W.P."/>
        </authorList>
    </citation>
    <scope>NUCLEOTIDE SEQUENCE [GENOMIC RNA]</scope>
</reference>
<reference key="2">
    <citation type="journal article" date="1990" name="Virology">
        <title>Nucleotide sequence and transcriptional analysis of molecular clones of CAEV which generate infectious virus.</title>
        <authorList>
            <person name="Saltarelli M."/>
            <person name="Querat G."/>
            <person name="Konings D.A.M."/>
            <person name="Vigne R."/>
            <person name="Clements J.E."/>
        </authorList>
    </citation>
    <scope>NUCLEOTIDE SEQUENCE [GENOMIC RNA]</scope>
</reference>
<reference key="3">
    <citation type="journal article" date="2003" name="Virology">
        <title>Lack of trans-activation function for Maedi Visna virus and Caprine arthritis encephalitis virus Tat proteins.</title>
        <authorList>
            <person name="Villet S."/>
            <person name="Faure C."/>
            <person name="Bouzar B.A."/>
            <person name="Morin T."/>
            <person name="Verdier G."/>
            <person name="Chebloune Y."/>
            <person name="Legras C."/>
        </authorList>
    </citation>
    <scope>FUNCTION</scope>
</reference>
<reference key="4">
    <citation type="journal article" date="2003" name="J. Virol.">
        <title>Maedi-visna virus and caprine arthritis encephalitis virus genomes encode a Vpr-like but no Tat protein.</title>
        <authorList>
            <person name="Villet S."/>
            <person name="Bouzar B.A."/>
            <person name="Morin T."/>
            <person name="Verdier G."/>
            <person name="Legras C."/>
            <person name="Chebloune Y."/>
        </authorList>
    </citation>
    <scope>FUNCTION</scope>
    <scope>SUBCELLULAR LOCATION</scope>
</reference>
<organism>
    <name type="scientific">Caprine arthritis encephalitis virus (strain Cork)</name>
    <name type="common">CAEV-Co</name>
    <dbReference type="NCBI Taxonomy" id="11661"/>
    <lineage>
        <taxon>Viruses</taxon>
        <taxon>Riboviria</taxon>
        <taxon>Pararnavirae</taxon>
        <taxon>Artverviricota</taxon>
        <taxon>Revtraviricetes</taxon>
        <taxon>Ortervirales</taxon>
        <taxon>Retroviridae</taxon>
        <taxon>Orthoretrovirinae</taxon>
        <taxon>Lentivirus</taxon>
        <taxon>Caprine arthritis encephalitis virus</taxon>
    </lineage>
</organism>
<gene>
    <name type="primary">tat</name>
</gene>
<name>VPRL_CAEVC</name>
<evidence type="ECO:0000255" key="1"/>
<evidence type="ECO:0000269" key="2">
    <source>
    </source>
</evidence>
<evidence type="ECO:0000269" key="3">
    <source>
    </source>
</evidence>
<evidence type="ECO:0000305" key="4"/>
<comment type="function">
    <text evidence="2 3">Seems to function as a Vpr-like protein, since it mediates host cell cycle arrest in G2 phase. Cell cycle arrest creates a favorable environment for maximizing viral expression and production.</text>
</comment>
<comment type="subcellular location">
    <subcellularLocation>
        <location evidence="4">Virion</location>
    </subcellularLocation>
    <subcellularLocation>
        <location evidence="3">Host nucleus</location>
    </subcellularLocation>
</comment>
<comment type="caution">
    <text evidence="4">Was first thought to be the equivalent of lentiviral Tat protein, but it does not induce any transactivation of viral LTR promoter, or if any, at very low rate. The LTR promoter of this virus has a high basal activity and does apparently not need transactivation by a Tat-like protein.</text>
</comment>
<proteinExistence type="predicted"/>
<protein>
    <recommendedName>
        <fullName>Probable Vpr-like protein</fullName>
    </recommendedName>
    <alternativeName>
        <fullName>Protein S</fullName>
    </alternativeName>
    <alternativeName>
        <fullName>Protein Tat</fullName>
    </alternativeName>
</protein>
<keyword id="KW-0131">Cell cycle</keyword>
<keyword id="KW-1048">Host nucleus</keyword>
<keyword id="KW-1185">Reference proteome</keyword>
<keyword id="KW-0946">Virion</keyword>